<organism>
    <name type="scientific">Arabidopsis thaliana</name>
    <name type="common">Mouse-ear cress</name>
    <dbReference type="NCBI Taxonomy" id="3702"/>
    <lineage>
        <taxon>Eukaryota</taxon>
        <taxon>Viridiplantae</taxon>
        <taxon>Streptophyta</taxon>
        <taxon>Embryophyta</taxon>
        <taxon>Tracheophyta</taxon>
        <taxon>Spermatophyta</taxon>
        <taxon>Magnoliopsida</taxon>
        <taxon>eudicotyledons</taxon>
        <taxon>Gunneridae</taxon>
        <taxon>Pentapetalae</taxon>
        <taxon>rosids</taxon>
        <taxon>malvids</taxon>
        <taxon>Brassicales</taxon>
        <taxon>Brassicaceae</taxon>
        <taxon>Camelineae</taxon>
        <taxon>Arabidopsis</taxon>
    </lineage>
</organism>
<evidence type="ECO:0000250" key="1"/>
<evidence type="ECO:0000255" key="2"/>
<evidence type="ECO:0000269" key="3">
    <source>
    </source>
</evidence>
<evidence type="ECO:0000305" key="4"/>
<sequence>MARLLLLFFFFLILLHYASCSRHEQEKDRIFHLPGEPNDVSFSHFSGYITVNESAGRALFYWLTESPPSENPESKPLVLWLNGGPGCSSVAYGAAEEIGPFRINPDGKTLYHNPYSWNKLANLLFLESPAGVGFSYSNTTSDLYTAGDQRTAEDAYVFLVKWFERFPQYKHREFYIAGESYAGHYVPQLSQIVYEKRNPAINFKGFIVGNAVIDDYHDYVGLFEYWWAHGLISDLTYHNLRITCEFGSSEHPSSKCTKAMEAADLEQGNIDPYSIYTVTCKKEAAALRSRFSRVRHPWMWRAYDPCTEKYSGMYFNSPEVQKAMHANITGLAYPWKGCSDIVGEKWADSPLSMLPIYKELIAAGLRIWVFSGDTDSVVPITGTRYSIRALKLQPLSKWYPWNDDGQVGGWSQVYKGLTLVTIHGAGHEVPLFRPRRAFLLFQSFLDNKPLPM</sequence>
<accession>Q9ZQQ0</accession>
<keyword id="KW-0121">Carboxypeptidase</keyword>
<keyword id="KW-1015">Disulfide bond</keyword>
<keyword id="KW-0325">Glycoprotein</keyword>
<keyword id="KW-0378">Hydrolase</keyword>
<keyword id="KW-0645">Protease</keyword>
<keyword id="KW-1185">Reference proteome</keyword>
<keyword id="KW-0964">Secreted</keyword>
<keyword id="KW-0732">Signal</keyword>
<name>SCP26_ARATH</name>
<protein>
    <recommendedName>
        <fullName>Serine carboxypeptidase-like 26</fullName>
        <ecNumber>3.4.16.-</ecNumber>
    </recommendedName>
</protein>
<gene>
    <name type="primary">SCPL26</name>
    <name type="ordered locus">At2g35780</name>
    <name type="ORF">T20F21.2</name>
</gene>
<proteinExistence type="evidence at transcript level"/>
<feature type="signal peptide" evidence="2">
    <location>
        <begin position="1"/>
        <end position="20"/>
    </location>
</feature>
<feature type="chain" id="PRO_0000274641" description="Serine carboxypeptidase-like 26">
    <location>
        <begin position="21"/>
        <end position="452"/>
    </location>
</feature>
<feature type="active site" evidence="1">
    <location>
        <position position="180"/>
    </location>
</feature>
<feature type="active site" evidence="1">
    <location>
        <position position="375"/>
    </location>
</feature>
<feature type="active site" evidence="1">
    <location>
        <position position="427"/>
    </location>
</feature>
<feature type="glycosylation site" description="N-linked (GlcNAc...) asparagine" evidence="2">
    <location>
        <position position="52"/>
    </location>
</feature>
<feature type="glycosylation site" description="N-linked (GlcNAc...) asparagine" evidence="2">
    <location>
        <position position="138"/>
    </location>
</feature>
<feature type="glycosylation site" description="N-linked (GlcNAc...) asparagine" evidence="2">
    <location>
        <position position="327"/>
    </location>
</feature>
<feature type="disulfide bond" evidence="1">
    <location>
        <begin position="87"/>
        <end position="338"/>
    </location>
</feature>
<feature type="disulfide bond" evidence="1">
    <location>
        <begin position="244"/>
        <end position="256"/>
    </location>
</feature>
<feature type="disulfide bond" evidence="1">
    <location>
        <begin position="280"/>
        <end position="306"/>
    </location>
</feature>
<dbReference type="EC" id="3.4.16.-"/>
<dbReference type="EMBL" id="AC006068">
    <property type="protein sequence ID" value="AAM15111.1"/>
    <property type="molecule type" value="Genomic_DNA"/>
</dbReference>
<dbReference type="EMBL" id="AC007017">
    <property type="protein sequence ID" value="AAD21479.1"/>
    <property type="molecule type" value="Genomic_DNA"/>
</dbReference>
<dbReference type="EMBL" id="CP002685">
    <property type="protein sequence ID" value="AEC09160.1"/>
    <property type="molecule type" value="Genomic_DNA"/>
</dbReference>
<dbReference type="EMBL" id="AY088044">
    <property type="protein sequence ID" value="AAM65590.1"/>
    <property type="molecule type" value="mRNA"/>
</dbReference>
<dbReference type="EMBL" id="BT029178">
    <property type="protein sequence ID" value="ABJ17113.1"/>
    <property type="molecule type" value="mRNA"/>
</dbReference>
<dbReference type="PIR" id="H84772">
    <property type="entry name" value="H84772"/>
</dbReference>
<dbReference type="RefSeq" id="NP_181121.1">
    <property type="nucleotide sequence ID" value="NM_129136.5"/>
</dbReference>
<dbReference type="SMR" id="Q9ZQQ0"/>
<dbReference type="FunCoup" id="Q9ZQQ0">
    <property type="interactions" value="10"/>
</dbReference>
<dbReference type="STRING" id="3702.Q9ZQQ0"/>
<dbReference type="ESTHER" id="arath-SCP26">
    <property type="family name" value="Carboxypeptidase_S10"/>
</dbReference>
<dbReference type="MEROPS" id="S10.A43"/>
<dbReference type="GlyCosmos" id="Q9ZQQ0">
    <property type="glycosylation" value="3 sites, No reported glycans"/>
</dbReference>
<dbReference type="GlyGen" id="Q9ZQQ0">
    <property type="glycosylation" value="3 sites"/>
</dbReference>
<dbReference type="PaxDb" id="3702-AT2G35780.1"/>
<dbReference type="ProteomicsDB" id="232939"/>
<dbReference type="EnsemblPlants" id="AT2G35780.1">
    <property type="protein sequence ID" value="AT2G35780.1"/>
    <property type="gene ID" value="AT2G35780"/>
</dbReference>
<dbReference type="GeneID" id="818150"/>
<dbReference type="Gramene" id="AT2G35780.1">
    <property type="protein sequence ID" value="AT2G35780.1"/>
    <property type="gene ID" value="AT2G35780"/>
</dbReference>
<dbReference type="KEGG" id="ath:AT2G35780"/>
<dbReference type="Araport" id="AT2G35780"/>
<dbReference type="TAIR" id="AT2G35780">
    <property type="gene designation" value="SCPL26"/>
</dbReference>
<dbReference type="eggNOG" id="KOG1282">
    <property type="taxonomic scope" value="Eukaryota"/>
</dbReference>
<dbReference type="HOGENOM" id="CLU_008523_13_0_1"/>
<dbReference type="InParanoid" id="Q9ZQQ0"/>
<dbReference type="OMA" id="YTVTCKK"/>
<dbReference type="OrthoDB" id="443318at2759"/>
<dbReference type="PhylomeDB" id="Q9ZQQ0"/>
<dbReference type="PRO" id="PR:Q9ZQQ0"/>
<dbReference type="Proteomes" id="UP000006548">
    <property type="component" value="Chromosome 2"/>
</dbReference>
<dbReference type="ExpressionAtlas" id="Q9ZQQ0">
    <property type="expression patterns" value="baseline and differential"/>
</dbReference>
<dbReference type="GO" id="GO:0005783">
    <property type="term" value="C:endoplasmic reticulum"/>
    <property type="evidence" value="ECO:0007005"/>
    <property type="project" value="TAIR"/>
</dbReference>
<dbReference type="GO" id="GO:0005576">
    <property type="term" value="C:extracellular region"/>
    <property type="evidence" value="ECO:0007669"/>
    <property type="project" value="UniProtKB-SubCell"/>
</dbReference>
<dbReference type="GO" id="GO:0000325">
    <property type="term" value="C:plant-type vacuole"/>
    <property type="evidence" value="ECO:0007005"/>
    <property type="project" value="TAIR"/>
</dbReference>
<dbReference type="GO" id="GO:0099503">
    <property type="term" value="C:secretory vesicle"/>
    <property type="evidence" value="ECO:0007005"/>
    <property type="project" value="TAIR"/>
</dbReference>
<dbReference type="GO" id="GO:0005773">
    <property type="term" value="C:vacuole"/>
    <property type="evidence" value="ECO:0007005"/>
    <property type="project" value="TAIR"/>
</dbReference>
<dbReference type="GO" id="GO:0004185">
    <property type="term" value="F:serine-type carboxypeptidase activity"/>
    <property type="evidence" value="ECO:0007669"/>
    <property type="project" value="InterPro"/>
</dbReference>
<dbReference type="GO" id="GO:0006508">
    <property type="term" value="P:proteolysis"/>
    <property type="evidence" value="ECO:0007669"/>
    <property type="project" value="UniProtKB-KW"/>
</dbReference>
<dbReference type="FunFam" id="3.40.50.11320:FF:000003">
    <property type="entry name" value="Carboxypeptidase"/>
    <property type="match status" value="1"/>
</dbReference>
<dbReference type="FunFam" id="3.40.50.1820:FF:000013">
    <property type="entry name" value="Carboxypeptidase"/>
    <property type="match status" value="1"/>
</dbReference>
<dbReference type="Gene3D" id="3.40.50.11320">
    <property type="match status" value="1"/>
</dbReference>
<dbReference type="Gene3D" id="6.10.250.940">
    <property type="match status" value="1"/>
</dbReference>
<dbReference type="Gene3D" id="3.40.50.1820">
    <property type="entry name" value="alpha/beta hydrolase"/>
    <property type="match status" value="1"/>
</dbReference>
<dbReference type="InterPro" id="IPR029058">
    <property type="entry name" value="AB_hydrolase_fold"/>
</dbReference>
<dbReference type="InterPro" id="IPR001563">
    <property type="entry name" value="Peptidase_S10"/>
</dbReference>
<dbReference type="InterPro" id="IPR033124">
    <property type="entry name" value="Ser_caboxypep_his_AS"/>
</dbReference>
<dbReference type="InterPro" id="IPR018202">
    <property type="entry name" value="Ser_caboxypep_ser_AS"/>
</dbReference>
<dbReference type="PANTHER" id="PTHR11802:SF244">
    <property type="entry name" value="SERINE CARBOXYPEPTIDASE-LIKE 26"/>
    <property type="match status" value="1"/>
</dbReference>
<dbReference type="PANTHER" id="PTHR11802">
    <property type="entry name" value="SERINE PROTEASE FAMILY S10 SERINE CARBOXYPEPTIDASE"/>
    <property type="match status" value="1"/>
</dbReference>
<dbReference type="Pfam" id="PF00450">
    <property type="entry name" value="Peptidase_S10"/>
    <property type="match status" value="1"/>
</dbReference>
<dbReference type="PRINTS" id="PR00724">
    <property type="entry name" value="CRBOXYPTASEC"/>
</dbReference>
<dbReference type="SUPFAM" id="SSF53474">
    <property type="entry name" value="alpha/beta-Hydrolases"/>
    <property type="match status" value="1"/>
</dbReference>
<dbReference type="PROSITE" id="PS00560">
    <property type="entry name" value="CARBOXYPEPT_SER_HIS"/>
    <property type="match status" value="1"/>
</dbReference>
<dbReference type="PROSITE" id="PS00131">
    <property type="entry name" value="CARBOXYPEPT_SER_SER"/>
    <property type="match status" value="1"/>
</dbReference>
<reference key="1">
    <citation type="journal article" date="1999" name="Nature">
        <title>Sequence and analysis of chromosome 2 of the plant Arabidopsis thaliana.</title>
        <authorList>
            <person name="Lin X."/>
            <person name="Kaul S."/>
            <person name="Rounsley S.D."/>
            <person name="Shea T.P."/>
            <person name="Benito M.-I."/>
            <person name="Town C.D."/>
            <person name="Fujii C.Y."/>
            <person name="Mason T.M."/>
            <person name="Bowman C.L."/>
            <person name="Barnstead M.E."/>
            <person name="Feldblyum T.V."/>
            <person name="Buell C.R."/>
            <person name="Ketchum K.A."/>
            <person name="Lee J.J."/>
            <person name="Ronning C.M."/>
            <person name="Koo H.L."/>
            <person name="Moffat K.S."/>
            <person name="Cronin L.A."/>
            <person name="Shen M."/>
            <person name="Pai G."/>
            <person name="Van Aken S."/>
            <person name="Umayam L."/>
            <person name="Tallon L.J."/>
            <person name="Gill J.E."/>
            <person name="Adams M.D."/>
            <person name="Carrera A.J."/>
            <person name="Creasy T.H."/>
            <person name="Goodman H.M."/>
            <person name="Somerville C.R."/>
            <person name="Copenhaver G.P."/>
            <person name="Preuss D."/>
            <person name="Nierman W.C."/>
            <person name="White O."/>
            <person name="Eisen J.A."/>
            <person name="Salzberg S.L."/>
            <person name="Fraser C.M."/>
            <person name="Venter J.C."/>
        </authorList>
    </citation>
    <scope>NUCLEOTIDE SEQUENCE [LARGE SCALE GENOMIC DNA]</scope>
    <source>
        <strain>cv. Columbia</strain>
    </source>
</reference>
<reference key="2">
    <citation type="journal article" date="2017" name="Plant J.">
        <title>Araport11: a complete reannotation of the Arabidopsis thaliana reference genome.</title>
        <authorList>
            <person name="Cheng C.Y."/>
            <person name="Krishnakumar V."/>
            <person name="Chan A.P."/>
            <person name="Thibaud-Nissen F."/>
            <person name="Schobel S."/>
            <person name="Town C.D."/>
        </authorList>
    </citation>
    <scope>GENOME REANNOTATION</scope>
    <source>
        <strain>cv. Columbia</strain>
    </source>
</reference>
<reference key="3">
    <citation type="submission" date="2002-03" db="EMBL/GenBank/DDBJ databases">
        <title>Full-length cDNA from Arabidopsis thaliana.</title>
        <authorList>
            <person name="Brover V.V."/>
            <person name="Troukhan M.E."/>
            <person name="Alexandrov N.A."/>
            <person name="Lu Y.-P."/>
            <person name="Flavell R.B."/>
            <person name="Feldmann K.A."/>
        </authorList>
    </citation>
    <scope>NUCLEOTIDE SEQUENCE [LARGE SCALE MRNA]</scope>
</reference>
<reference key="4">
    <citation type="submission" date="2006-10" db="EMBL/GenBank/DDBJ databases">
        <title>Arabidopsis ORF clone.</title>
        <authorList>
            <person name="Bautista V.R."/>
            <person name="Kim C.J."/>
            <person name="Chen H."/>
            <person name="Quinitio C."/>
            <person name="Ecker J.R."/>
        </authorList>
    </citation>
    <scope>NUCLEOTIDE SEQUENCE [LARGE SCALE MRNA]</scope>
    <source>
        <strain>cv. Columbia</strain>
    </source>
</reference>
<reference key="5">
    <citation type="journal article" date="2005" name="Plant Physiol.">
        <title>An expression and bioinformatics analysis of the Arabidopsis serine carboxypeptidase-like gene family.</title>
        <authorList>
            <person name="Fraser C.M."/>
            <person name="Rider L.W."/>
            <person name="Chapple C."/>
        </authorList>
    </citation>
    <scope>GENE FAMILY</scope>
    <scope>TISSUE SPECIFICITY</scope>
    <scope>NOMENCLATURE</scope>
</reference>
<comment type="function">
    <text evidence="1">Probable carboxypeptidase.</text>
</comment>
<comment type="subcellular location">
    <subcellularLocation>
        <location evidence="4">Secreted</location>
    </subcellularLocation>
</comment>
<comment type="tissue specificity">
    <text evidence="3">Ubiquitous.</text>
</comment>
<comment type="similarity">
    <text evidence="4">Belongs to the peptidase S10 family.</text>
</comment>